<sequence length="303" mass="33845">MKNIIFMGTPSYATCILKELIDKGFNVQALFTQSDKPVGRKQILTPSDTKKFVLENNLNIEIFTPKSLKDENIINEIKILKPDFIVVAAYGKILPKEILDIAPCINLHASLLPKYRGASPIQSAILNGDKISGVCTMLMEEGLDSGAILESTECDIEGKNSAEVFIMFSNLAAKLTISTLLNFEKIIPKKQDESLVIHCKKIKKEDGLITLDNASEIYQKFLAFYPWPGIFFENGMKFLDIELIDSEKTQKSGVILQVEKESFLLSCKKGILKIKTLQESGKKVLDAKTYLNGKRLKLGDSLF</sequence>
<protein>
    <recommendedName>
        <fullName evidence="1">Methionyl-tRNA formyltransferase</fullName>
        <ecNumber evidence="1">2.1.2.9</ecNumber>
    </recommendedName>
</protein>
<feature type="chain" id="PRO_1000190013" description="Methionyl-tRNA formyltransferase">
    <location>
        <begin position="1"/>
        <end position="303"/>
    </location>
</feature>
<feature type="binding site" evidence="1">
    <location>
        <begin position="110"/>
        <end position="113"/>
    </location>
    <ligand>
        <name>(6S)-5,6,7,8-tetrahydrofolate</name>
        <dbReference type="ChEBI" id="CHEBI:57453"/>
    </ligand>
</feature>
<keyword id="KW-0648">Protein biosynthesis</keyword>
<keyword id="KW-1185">Reference proteome</keyword>
<keyword id="KW-0808">Transferase</keyword>
<dbReference type="EC" id="2.1.2.9" evidence="1"/>
<dbReference type="EMBL" id="CP000932">
    <property type="protein sequence ID" value="ACM63549.1"/>
    <property type="molecule type" value="Genomic_DNA"/>
</dbReference>
<dbReference type="RefSeq" id="WP_012660933.1">
    <property type="nucleotide sequence ID" value="NC_012039.1"/>
</dbReference>
<dbReference type="SMR" id="B9KER4"/>
<dbReference type="STRING" id="306263.Cla_0186"/>
<dbReference type="KEGG" id="cla:CLA_0186"/>
<dbReference type="PATRIC" id="fig|306263.5.peg.185"/>
<dbReference type="eggNOG" id="COG0223">
    <property type="taxonomic scope" value="Bacteria"/>
</dbReference>
<dbReference type="HOGENOM" id="CLU_033347_1_1_7"/>
<dbReference type="Proteomes" id="UP000007727">
    <property type="component" value="Chromosome"/>
</dbReference>
<dbReference type="GO" id="GO:0005829">
    <property type="term" value="C:cytosol"/>
    <property type="evidence" value="ECO:0007669"/>
    <property type="project" value="TreeGrafter"/>
</dbReference>
<dbReference type="GO" id="GO:0004479">
    <property type="term" value="F:methionyl-tRNA formyltransferase activity"/>
    <property type="evidence" value="ECO:0007669"/>
    <property type="project" value="UniProtKB-UniRule"/>
</dbReference>
<dbReference type="CDD" id="cd08646">
    <property type="entry name" value="FMT_core_Met-tRNA-FMT_N"/>
    <property type="match status" value="1"/>
</dbReference>
<dbReference type="CDD" id="cd08704">
    <property type="entry name" value="Met_tRNA_FMT_C"/>
    <property type="match status" value="1"/>
</dbReference>
<dbReference type="Gene3D" id="3.40.50.12230">
    <property type="match status" value="1"/>
</dbReference>
<dbReference type="HAMAP" id="MF_00182">
    <property type="entry name" value="Formyl_trans"/>
    <property type="match status" value="1"/>
</dbReference>
<dbReference type="InterPro" id="IPR005794">
    <property type="entry name" value="Fmt"/>
</dbReference>
<dbReference type="InterPro" id="IPR005793">
    <property type="entry name" value="Formyl_trans_C"/>
</dbReference>
<dbReference type="InterPro" id="IPR002376">
    <property type="entry name" value="Formyl_transf_N"/>
</dbReference>
<dbReference type="InterPro" id="IPR036477">
    <property type="entry name" value="Formyl_transf_N_sf"/>
</dbReference>
<dbReference type="InterPro" id="IPR011034">
    <property type="entry name" value="Formyl_transferase-like_C_sf"/>
</dbReference>
<dbReference type="InterPro" id="IPR001555">
    <property type="entry name" value="GART_AS"/>
</dbReference>
<dbReference type="InterPro" id="IPR044135">
    <property type="entry name" value="Met-tRNA-FMT_C"/>
</dbReference>
<dbReference type="InterPro" id="IPR041711">
    <property type="entry name" value="Met-tRNA-FMT_N"/>
</dbReference>
<dbReference type="NCBIfam" id="TIGR00460">
    <property type="entry name" value="fmt"/>
    <property type="match status" value="1"/>
</dbReference>
<dbReference type="PANTHER" id="PTHR11138">
    <property type="entry name" value="METHIONYL-TRNA FORMYLTRANSFERASE"/>
    <property type="match status" value="1"/>
</dbReference>
<dbReference type="PANTHER" id="PTHR11138:SF5">
    <property type="entry name" value="METHIONYL-TRNA FORMYLTRANSFERASE, MITOCHONDRIAL"/>
    <property type="match status" value="1"/>
</dbReference>
<dbReference type="Pfam" id="PF02911">
    <property type="entry name" value="Formyl_trans_C"/>
    <property type="match status" value="1"/>
</dbReference>
<dbReference type="Pfam" id="PF00551">
    <property type="entry name" value="Formyl_trans_N"/>
    <property type="match status" value="1"/>
</dbReference>
<dbReference type="SUPFAM" id="SSF50486">
    <property type="entry name" value="FMT C-terminal domain-like"/>
    <property type="match status" value="1"/>
</dbReference>
<dbReference type="SUPFAM" id="SSF53328">
    <property type="entry name" value="Formyltransferase"/>
    <property type="match status" value="1"/>
</dbReference>
<dbReference type="PROSITE" id="PS00373">
    <property type="entry name" value="GART"/>
    <property type="match status" value="1"/>
</dbReference>
<reference key="1">
    <citation type="journal article" date="2008" name="Foodborne Pathog. Dis.">
        <title>The complete genome sequence and analysis of the human pathogen Campylobacter lari.</title>
        <authorList>
            <person name="Miller W.G."/>
            <person name="Wang G."/>
            <person name="Binnewies T.T."/>
            <person name="Parker C.T."/>
        </authorList>
    </citation>
    <scope>NUCLEOTIDE SEQUENCE [LARGE SCALE GENOMIC DNA]</scope>
    <source>
        <strain>RM2100 / D67 / ATCC BAA-1060</strain>
    </source>
</reference>
<accession>B9KER4</accession>
<name>FMT_CAMLR</name>
<organism>
    <name type="scientific">Campylobacter lari (strain RM2100 / D67 / ATCC BAA-1060)</name>
    <dbReference type="NCBI Taxonomy" id="306263"/>
    <lineage>
        <taxon>Bacteria</taxon>
        <taxon>Pseudomonadati</taxon>
        <taxon>Campylobacterota</taxon>
        <taxon>Epsilonproteobacteria</taxon>
        <taxon>Campylobacterales</taxon>
        <taxon>Campylobacteraceae</taxon>
        <taxon>Campylobacter</taxon>
    </lineage>
</organism>
<proteinExistence type="inferred from homology"/>
<gene>
    <name evidence="1" type="primary">fmt</name>
    <name type="ordered locus">Cla_0186</name>
</gene>
<evidence type="ECO:0000255" key="1">
    <source>
        <dbReference type="HAMAP-Rule" id="MF_00182"/>
    </source>
</evidence>
<comment type="function">
    <text evidence="1">Attaches a formyl group to the free amino group of methionyl-tRNA(fMet). The formyl group appears to play a dual role in the initiator identity of N-formylmethionyl-tRNA by promoting its recognition by IF2 and preventing the misappropriation of this tRNA by the elongation apparatus.</text>
</comment>
<comment type="catalytic activity">
    <reaction evidence="1">
        <text>L-methionyl-tRNA(fMet) + (6R)-10-formyltetrahydrofolate = N-formyl-L-methionyl-tRNA(fMet) + (6S)-5,6,7,8-tetrahydrofolate + H(+)</text>
        <dbReference type="Rhea" id="RHEA:24380"/>
        <dbReference type="Rhea" id="RHEA-COMP:9952"/>
        <dbReference type="Rhea" id="RHEA-COMP:9953"/>
        <dbReference type="ChEBI" id="CHEBI:15378"/>
        <dbReference type="ChEBI" id="CHEBI:57453"/>
        <dbReference type="ChEBI" id="CHEBI:78530"/>
        <dbReference type="ChEBI" id="CHEBI:78844"/>
        <dbReference type="ChEBI" id="CHEBI:195366"/>
        <dbReference type="EC" id="2.1.2.9"/>
    </reaction>
</comment>
<comment type="similarity">
    <text evidence="1">Belongs to the Fmt family.</text>
</comment>